<evidence type="ECO:0000255" key="1">
    <source>
        <dbReference type="HAMAP-Rule" id="MF_01342"/>
    </source>
</evidence>
<evidence type="ECO:0000256" key="2">
    <source>
        <dbReference type="SAM" id="MobiDB-lite"/>
    </source>
</evidence>
<evidence type="ECO:0000305" key="3"/>
<accession>B6J256</accession>
<keyword id="KW-0687">Ribonucleoprotein</keyword>
<keyword id="KW-0689">Ribosomal protein</keyword>
<keyword id="KW-0694">RNA-binding</keyword>
<keyword id="KW-0699">rRNA-binding</keyword>
<keyword id="KW-0820">tRNA-binding</keyword>
<feature type="chain" id="PRO_1000142954" description="Large ribosomal subunit protein uL16">
    <location>
        <begin position="1"/>
        <end position="137"/>
    </location>
</feature>
<feature type="region of interest" description="Disordered" evidence="2">
    <location>
        <begin position="1"/>
        <end position="20"/>
    </location>
</feature>
<feature type="compositionally biased region" description="Basic residues" evidence="2">
    <location>
        <begin position="7"/>
        <end position="17"/>
    </location>
</feature>
<reference key="1">
    <citation type="journal article" date="2009" name="Infect. Immun.">
        <title>Comparative genomics reveal extensive transposon-mediated genomic plasticity and diversity among potential effector proteins within the genus Coxiella.</title>
        <authorList>
            <person name="Beare P.A."/>
            <person name="Unsworth N."/>
            <person name="Andoh M."/>
            <person name="Voth D.E."/>
            <person name="Omsland A."/>
            <person name="Gilk S.D."/>
            <person name="Williams K.P."/>
            <person name="Sobral B.W."/>
            <person name="Kupko J.J. III"/>
            <person name="Porcella S.F."/>
            <person name="Samuel J.E."/>
            <person name="Heinzen R.A."/>
        </authorList>
    </citation>
    <scope>NUCLEOTIDE SEQUENCE [LARGE SCALE GENOMIC DNA]</scope>
    <source>
        <strain>CbuG_Q212</strain>
    </source>
</reference>
<comment type="function">
    <text evidence="1">Binds 23S rRNA and is also seen to make contacts with the A and possibly P site tRNAs.</text>
</comment>
<comment type="subunit">
    <text evidence="1">Part of the 50S ribosomal subunit.</text>
</comment>
<comment type="similarity">
    <text evidence="1">Belongs to the universal ribosomal protein uL16 family.</text>
</comment>
<sequence length="137" mass="15499">MLQPSNRKYRKDFKGRNRGVASRGNRVSFGEFGLKATECARITARQLEAARRTIARHIKRGGKITIRIFPDKPITKKPLEVRQGKGKGSVEYWVALVQPGRMIFEIEGVDEALAREAFSRAAAKLPLKCLFVKRTVM</sequence>
<organism>
    <name type="scientific">Coxiella burnetii (strain CbuG_Q212)</name>
    <name type="common">Coxiella burnetii (strain Q212)</name>
    <dbReference type="NCBI Taxonomy" id="434923"/>
    <lineage>
        <taxon>Bacteria</taxon>
        <taxon>Pseudomonadati</taxon>
        <taxon>Pseudomonadota</taxon>
        <taxon>Gammaproteobacteria</taxon>
        <taxon>Legionellales</taxon>
        <taxon>Coxiellaceae</taxon>
        <taxon>Coxiella</taxon>
    </lineage>
</organism>
<gene>
    <name evidence="1" type="primary">rplP</name>
    <name type="ordered locus">CbuG_1760</name>
</gene>
<dbReference type="EMBL" id="CP001019">
    <property type="protein sequence ID" value="ACJ19034.1"/>
    <property type="molecule type" value="Genomic_DNA"/>
</dbReference>
<dbReference type="RefSeq" id="WP_010957459.1">
    <property type="nucleotide sequence ID" value="NC_011527.1"/>
</dbReference>
<dbReference type="SMR" id="B6J256"/>
<dbReference type="KEGG" id="cbg:CbuG_1760"/>
<dbReference type="HOGENOM" id="CLU_078858_2_1_6"/>
<dbReference type="GO" id="GO:0022625">
    <property type="term" value="C:cytosolic large ribosomal subunit"/>
    <property type="evidence" value="ECO:0007669"/>
    <property type="project" value="TreeGrafter"/>
</dbReference>
<dbReference type="GO" id="GO:0019843">
    <property type="term" value="F:rRNA binding"/>
    <property type="evidence" value="ECO:0007669"/>
    <property type="project" value="UniProtKB-UniRule"/>
</dbReference>
<dbReference type="GO" id="GO:0003735">
    <property type="term" value="F:structural constituent of ribosome"/>
    <property type="evidence" value="ECO:0007669"/>
    <property type="project" value="InterPro"/>
</dbReference>
<dbReference type="GO" id="GO:0000049">
    <property type="term" value="F:tRNA binding"/>
    <property type="evidence" value="ECO:0007669"/>
    <property type="project" value="UniProtKB-KW"/>
</dbReference>
<dbReference type="GO" id="GO:0006412">
    <property type="term" value="P:translation"/>
    <property type="evidence" value="ECO:0007669"/>
    <property type="project" value="UniProtKB-UniRule"/>
</dbReference>
<dbReference type="CDD" id="cd01433">
    <property type="entry name" value="Ribosomal_L16_L10e"/>
    <property type="match status" value="1"/>
</dbReference>
<dbReference type="FunFam" id="3.90.1170.10:FF:000001">
    <property type="entry name" value="50S ribosomal protein L16"/>
    <property type="match status" value="1"/>
</dbReference>
<dbReference type="Gene3D" id="3.90.1170.10">
    <property type="entry name" value="Ribosomal protein L10e/L16"/>
    <property type="match status" value="1"/>
</dbReference>
<dbReference type="HAMAP" id="MF_01342">
    <property type="entry name" value="Ribosomal_uL16"/>
    <property type="match status" value="1"/>
</dbReference>
<dbReference type="InterPro" id="IPR047873">
    <property type="entry name" value="Ribosomal_uL16"/>
</dbReference>
<dbReference type="InterPro" id="IPR000114">
    <property type="entry name" value="Ribosomal_uL16_bact-type"/>
</dbReference>
<dbReference type="InterPro" id="IPR016180">
    <property type="entry name" value="Ribosomal_uL16_dom"/>
</dbReference>
<dbReference type="InterPro" id="IPR036920">
    <property type="entry name" value="Ribosomal_uL16_sf"/>
</dbReference>
<dbReference type="NCBIfam" id="TIGR01164">
    <property type="entry name" value="rplP_bact"/>
    <property type="match status" value="1"/>
</dbReference>
<dbReference type="PANTHER" id="PTHR12220">
    <property type="entry name" value="50S/60S RIBOSOMAL PROTEIN L16"/>
    <property type="match status" value="1"/>
</dbReference>
<dbReference type="PANTHER" id="PTHR12220:SF13">
    <property type="entry name" value="LARGE RIBOSOMAL SUBUNIT PROTEIN UL16M"/>
    <property type="match status" value="1"/>
</dbReference>
<dbReference type="Pfam" id="PF00252">
    <property type="entry name" value="Ribosomal_L16"/>
    <property type="match status" value="1"/>
</dbReference>
<dbReference type="PRINTS" id="PR00060">
    <property type="entry name" value="RIBOSOMALL16"/>
</dbReference>
<dbReference type="SUPFAM" id="SSF54686">
    <property type="entry name" value="Ribosomal protein L16p/L10e"/>
    <property type="match status" value="1"/>
</dbReference>
<proteinExistence type="inferred from homology"/>
<name>RL16_COXB2</name>
<protein>
    <recommendedName>
        <fullName evidence="1">Large ribosomal subunit protein uL16</fullName>
    </recommendedName>
    <alternativeName>
        <fullName evidence="3">50S ribosomal protein L16</fullName>
    </alternativeName>
</protein>